<evidence type="ECO:0000255" key="1">
    <source>
        <dbReference type="HAMAP-Rule" id="MF_00693"/>
    </source>
</evidence>
<evidence type="ECO:0000305" key="2"/>
<proteinExistence type="inferred from homology"/>
<organism>
    <name type="scientific">Synechococcus sp. (strain CC9605)</name>
    <dbReference type="NCBI Taxonomy" id="110662"/>
    <lineage>
        <taxon>Bacteria</taxon>
        <taxon>Bacillati</taxon>
        <taxon>Cyanobacteriota</taxon>
        <taxon>Cyanophyceae</taxon>
        <taxon>Synechococcales</taxon>
        <taxon>Synechococcaceae</taxon>
        <taxon>Synechococcus</taxon>
    </lineage>
</organism>
<name>Y2132_SYNSC</name>
<accession>Q3AHR1</accession>
<feature type="chain" id="PRO_0000257147" description="Probable transcriptional regulatory protein Syncc9605_2132">
    <location>
        <begin position="1"/>
        <end position="247"/>
    </location>
</feature>
<comment type="subcellular location">
    <subcellularLocation>
        <location evidence="1">Cytoplasm</location>
    </subcellularLocation>
</comment>
<comment type="similarity">
    <text evidence="1">Belongs to the TACO1 family.</text>
</comment>
<comment type="sequence caution" evidence="2">
    <conflict type="erroneous initiation">
        <sequence resource="EMBL-CDS" id="ABB35871"/>
    </conflict>
</comment>
<reference key="1">
    <citation type="submission" date="2005-07" db="EMBL/GenBank/DDBJ databases">
        <title>Complete sequence of Synechococcus sp. CC9605.</title>
        <authorList>
            <consortium name="US DOE Joint Genome Institute"/>
            <person name="Copeland A."/>
            <person name="Lucas S."/>
            <person name="Lapidus A."/>
            <person name="Barry K."/>
            <person name="Detter J.C."/>
            <person name="Glavina T."/>
            <person name="Hammon N."/>
            <person name="Israni S."/>
            <person name="Pitluck S."/>
            <person name="Schmutz J."/>
            <person name="Martinez M."/>
            <person name="Larimer F."/>
            <person name="Land M."/>
            <person name="Kyrpides N."/>
            <person name="Ivanova N."/>
            <person name="Richardson P."/>
        </authorList>
    </citation>
    <scope>NUCLEOTIDE SEQUENCE [LARGE SCALE GENOMIC DNA]</scope>
    <source>
        <strain>CC9605</strain>
    </source>
</reference>
<dbReference type="EMBL" id="CP000110">
    <property type="protein sequence ID" value="ABB35871.1"/>
    <property type="status" value="ALT_INIT"/>
    <property type="molecule type" value="Genomic_DNA"/>
</dbReference>
<dbReference type="RefSeq" id="WP_041435794.1">
    <property type="nucleotide sequence ID" value="NC_007516.1"/>
</dbReference>
<dbReference type="SMR" id="Q3AHR1"/>
<dbReference type="STRING" id="110662.Syncc9605_2132"/>
<dbReference type="KEGG" id="syd:Syncc9605_2132"/>
<dbReference type="eggNOG" id="COG0217">
    <property type="taxonomic scope" value="Bacteria"/>
</dbReference>
<dbReference type="HOGENOM" id="CLU_062974_2_2_3"/>
<dbReference type="OrthoDB" id="9781053at2"/>
<dbReference type="GO" id="GO:0005829">
    <property type="term" value="C:cytosol"/>
    <property type="evidence" value="ECO:0007669"/>
    <property type="project" value="TreeGrafter"/>
</dbReference>
<dbReference type="GO" id="GO:0003677">
    <property type="term" value="F:DNA binding"/>
    <property type="evidence" value="ECO:0007669"/>
    <property type="project" value="UniProtKB-UniRule"/>
</dbReference>
<dbReference type="GO" id="GO:0006355">
    <property type="term" value="P:regulation of DNA-templated transcription"/>
    <property type="evidence" value="ECO:0007669"/>
    <property type="project" value="UniProtKB-UniRule"/>
</dbReference>
<dbReference type="FunFam" id="1.10.10.200:FF:000002">
    <property type="entry name" value="Probable transcriptional regulatory protein CLM62_37755"/>
    <property type="match status" value="1"/>
</dbReference>
<dbReference type="Gene3D" id="1.10.10.200">
    <property type="match status" value="1"/>
</dbReference>
<dbReference type="Gene3D" id="3.30.70.980">
    <property type="match status" value="2"/>
</dbReference>
<dbReference type="HAMAP" id="MF_00693">
    <property type="entry name" value="Transcrip_reg_TACO1"/>
    <property type="match status" value="1"/>
</dbReference>
<dbReference type="InterPro" id="IPR017856">
    <property type="entry name" value="Integrase-like_N"/>
</dbReference>
<dbReference type="InterPro" id="IPR048300">
    <property type="entry name" value="TACO1_YebC-like_2nd/3rd_dom"/>
</dbReference>
<dbReference type="InterPro" id="IPR049083">
    <property type="entry name" value="TACO1_YebC_N"/>
</dbReference>
<dbReference type="InterPro" id="IPR002876">
    <property type="entry name" value="Transcrip_reg_TACO1-like"/>
</dbReference>
<dbReference type="InterPro" id="IPR026564">
    <property type="entry name" value="Transcrip_reg_TACO1-like_dom3"/>
</dbReference>
<dbReference type="InterPro" id="IPR029072">
    <property type="entry name" value="YebC-like"/>
</dbReference>
<dbReference type="NCBIfam" id="NF001030">
    <property type="entry name" value="PRK00110.1"/>
    <property type="match status" value="1"/>
</dbReference>
<dbReference type="NCBIfam" id="NF009044">
    <property type="entry name" value="PRK12378.1"/>
    <property type="match status" value="1"/>
</dbReference>
<dbReference type="NCBIfam" id="TIGR01033">
    <property type="entry name" value="YebC/PmpR family DNA-binding transcriptional regulator"/>
    <property type="match status" value="1"/>
</dbReference>
<dbReference type="PANTHER" id="PTHR12532:SF6">
    <property type="entry name" value="TRANSCRIPTIONAL REGULATORY PROTEIN YEBC-RELATED"/>
    <property type="match status" value="1"/>
</dbReference>
<dbReference type="PANTHER" id="PTHR12532">
    <property type="entry name" value="TRANSLATIONAL ACTIVATOR OF CYTOCHROME C OXIDASE 1"/>
    <property type="match status" value="1"/>
</dbReference>
<dbReference type="Pfam" id="PF20772">
    <property type="entry name" value="TACO1_YebC_N"/>
    <property type="match status" value="1"/>
</dbReference>
<dbReference type="Pfam" id="PF01709">
    <property type="entry name" value="Transcrip_reg"/>
    <property type="match status" value="1"/>
</dbReference>
<dbReference type="SUPFAM" id="SSF75625">
    <property type="entry name" value="YebC-like"/>
    <property type="match status" value="1"/>
</dbReference>
<protein>
    <recommendedName>
        <fullName evidence="1">Probable transcriptional regulatory protein Syncc9605_2132</fullName>
    </recommendedName>
</protein>
<keyword id="KW-0963">Cytoplasm</keyword>
<keyword id="KW-0238">DNA-binding</keyword>
<keyword id="KW-0804">Transcription</keyword>
<keyword id="KW-0805">Transcription regulation</keyword>
<sequence>MAGHSKWSQIKRTKAVVDAKRGAVFTRLGREIMVAARAGADPAGNFQLRTAISKARAAGVPASNIERAIAKGSGQAGDGAQLEDVRYEGYGPGGMAVLVEALTDNRNRTAADLRLAFSKNGGNLGENGCVAYLFEHRSEVILNAGPDDEERLLESLLELDADGYELLDGAVVVHGPFEALESLQDGLRHADWNVREWGHHWSAQTSVSVNDPETARSCLKLLDALDGLDDVRSVSANLDLADELEID</sequence>
<gene>
    <name type="ordered locus">Syncc9605_2132</name>
</gene>